<organism>
    <name type="scientific">Arabidopsis thaliana</name>
    <name type="common">Mouse-ear cress</name>
    <dbReference type="NCBI Taxonomy" id="3702"/>
    <lineage>
        <taxon>Eukaryota</taxon>
        <taxon>Viridiplantae</taxon>
        <taxon>Streptophyta</taxon>
        <taxon>Embryophyta</taxon>
        <taxon>Tracheophyta</taxon>
        <taxon>Spermatophyta</taxon>
        <taxon>Magnoliopsida</taxon>
        <taxon>eudicotyledons</taxon>
        <taxon>Gunneridae</taxon>
        <taxon>Pentapetalae</taxon>
        <taxon>rosids</taxon>
        <taxon>malvids</taxon>
        <taxon>Brassicales</taxon>
        <taxon>Brassicaceae</taxon>
        <taxon>Camelineae</taxon>
        <taxon>Arabidopsis</taxon>
    </lineage>
</organism>
<keyword id="KW-0938">Abscisic acid signaling pathway</keyword>
<keyword id="KW-0007">Acetylation</keyword>
<keyword id="KW-0611">Plant defense</keyword>
<keyword id="KW-1185">Reference proteome</keyword>
<gene>
    <name evidence="5" type="primary">NRP1</name>
    <name evidence="6" type="synonym">RPI-11</name>
    <name evidence="8" type="ordered locus">At2g03440</name>
    <name evidence="9" type="ORF">T4M8.13</name>
</gene>
<feature type="chain" id="PRO_0000437190" description="Nodulin-related protein 1">
    <location>
        <begin position="1"/>
        <end position="187"/>
    </location>
</feature>
<feature type="region of interest" description="Disordered" evidence="1">
    <location>
        <begin position="1"/>
        <end position="66"/>
    </location>
</feature>
<feature type="region of interest" description="Disordered" evidence="1">
    <location>
        <begin position="132"/>
        <end position="176"/>
    </location>
</feature>
<feature type="compositionally biased region" description="Basic and acidic residues" evidence="1">
    <location>
        <begin position="7"/>
        <end position="48"/>
    </location>
</feature>
<feature type="compositionally biased region" description="Gly residues" evidence="1">
    <location>
        <begin position="142"/>
        <end position="158"/>
    </location>
</feature>
<feature type="modified residue" description="N-acetylmethionine" evidence="10">
    <location>
        <position position="1"/>
    </location>
</feature>
<feature type="sequence conflict" description="In Ref. 3; AAO42832 and 4; BAE99484." evidence="7" ref="3 4">
    <original>V</original>
    <variation>I</variation>
    <location>
        <position position="75"/>
    </location>
</feature>
<dbReference type="EMBL" id="AC006284">
    <property type="protein sequence ID" value="AAD17432.1"/>
    <property type="molecule type" value="Genomic_DNA"/>
</dbReference>
<dbReference type="EMBL" id="CP002685">
    <property type="protein sequence ID" value="AEC05700.1"/>
    <property type="molecule type" value="Genomic_DNA"/>
</dbReference>
<dbReference type="EMBL" id="AY136477">
    <property type="protein sequence ID" value="AAM97142.1"/>
    <property type="molecule type" value="mRNA"/>
</dbReference>
<dbReference type="EMBL" id="BT004586">
    <property type="protein sequence ID" value="AAO42832.1"/>
    <property type="molecule type" value="mRNA"/>
</dbReference>
<dbReference type="EMBL" id="AK227483">
    <property type="protein sequence ID" value="BAE99484.1"/>
    <property type="molecule type" value="mRNA"/>
</dbReference>
<dbReference type="PIR" id="E84448">
    <property type="entry name" value="E84448"/>
</dbReference>
<dbReference type="RefSeq" id="NP_178443.1">
    <property type="nucleotide sequence ID" value="NM_126395.3"/>
</dbReference>
<dbReference type="SMR" id="Q9ZQ80"/>
<dbReference type="FunCoup" id="Q9ZQ80">
    <property type="interactions" value="398"/>
</dbReference>
<dbReference type="STRING" id="3702.Q9ZQ80"/>
<dbReference type="iPTMnet" id="Q9ZQ80"/>
<dbReference type="PaxDb" id="3702-AT2G03440.1"/>
<dbReference type="ProMEX" id="Q9ZQ80"/>
<dbReference type="ProteomicsDB" id="236818"/>
<dbReference type="EnsemblPlants" id="AT2G03440.1">
    <property type="protein sequence ID" value="AT2G03440.1"/>
    <property type="gene ID" value="AT2G03440"/>
</dbReference>
<dbReference type="GeneID" id="814873"/>
<dbReference type="Gramene" id="AT2G03440.1">
    <property type="protein sequence ID" value="AT2G03440.1"/>
    <property type="gene ID" value="AT2G03440"/>
</dbReference>
<dbReference type="KEGG" id="ath:AT2G03440"/>
<dbReference type="Araport" id="AT2G03440"/>
<dbReference type="TAIR" id="AT2G03440">
    <property type="gene designation" value="NRP1"/>
</dbReference>
<dbReference type="eggNOG" id="ENOG502S1DM">
    <property type="taxonomic scope" value="Eukaryota"/>
</dbReference>
<dbReference type="HOGENOM" id="CLU_122604_0_0_1"/>
<dbReference type="InParanoid" id="Q9ZQ80"/>
<dbReference type="OMA" id="YGDYIKM"/>
<dbReference type="PRO" id="PR:Q9ZQ80"/>
<dbReference type="Proteomes" id="UP000006548">
    <property type="component" value="Chromosome 2"/>
</dbReference>
<dbReference type="ExpressionAtlas" id="Q9ZQ80">
    <property type="expression patterns" value="baseline and differential"/>
</dbReference>
<dbReference type="GO" id="GO:0005829">
    <property type="term" value="C:cytosol"/>
    <property type="evidence" value="ECO:0007005"/>
    <property type="project" value="TAIR"/>
</dbReference>
<dbReference type="GO" id="GO:0005739">
    <property type="term" value="C:mitochondrion"/>
    <property type="evidence" value="ECO:0007005"/>
    <property type="project" value="TAIR"/>
</dbReference>
<dbReference type="GO" id="GO:0009738">
    <property type="term" value="P:abscisic acid-activated signaling pathway"/>
    <property type="evidence" value="ECO:0000315"/>
    <property type="project" value="TAIR"/>
</dbReference>
<dbReference type="GO" id="GO:0006952">
    <property type="term" value="P:defense response"/>
    <property type="evidence" value="ECO:0007669"/>
    <property type="project" value="UniProtKB-KW"/>
</dbReference>
<dbReference type="GO" id="GO:1900426">
    <property type="term" value="P:positive regulation of defense response to bacterium"/>
    <property type="evidence" value="ECO:0000315"/>
    <property type="project" value="UniProtKB"/>
</dbReference>
<dbReference type="GO" id="GO:0010115">
    <property type="term" value="P:regulation of abscisic acid biosynthetic process"/>
    <property type="evidence" value="ECO:0007669"/>
    <property type="project" value="InterPro"/>
</dbReference>
<dbReference type="GO" id="GO:0009617">
    <property type="term" value="P:response to bacterium"/>
    <property type="evidence" value="ECO:0000270"/>
    <property type="project" value="TAIR"/>
</dbReference>
<dbReference type="GO" id="GO:0009409">
    <property type="term" value="P:response to cold"/>
    <property type="evidence" value="ECO:0000270"/>
    <property type="project" value="TAIR"/>
</dbReference>
<dbReference type="GO" id="GO:0009408">
    <property type="term" value="P:response to heat"/>
    <property type="evidence" value="ECO:0000315"/>
    <property type="project" value="TAIR"/>
</dbReference>
<dbReference type="GO" id="GO:0009651">
    <property type="term" value="P:response to salt stress"/>
    <property type="evidence" value="ECO:0000270"/>
    <property type="project" value="UniProtKB"/>
</dbReference>
<dbReference type="InterPro" id="IPR040294">
    <property type="entry name" value="Nodulin-rel_1/2"/>
</dbReference>
<dbReference type="PANTHER" id="PTHR35098">
    <property type="entry name" value="EXPRESSED PROTEIN"/>
    <property type="match status" value="1"/>
</dbReference>
<dbReference type="PANTHER" id="PTHR35098:SF4">
    <property type="entry name" value="NODULIN-RELATED PROTEIN 1"/>
    <property type="match status" value="1"/>
</dbReference>
<accession>Q9ZQ80</accession>
<accession>Q84VZ7</accession>
<evidence type="ECO:0000256" key="1">
    <source>
        <dbReference type="SAM" id="MobiDB-lite"/>
    </source>
</evidence>
<evidence type="ECO:0000269" key="2">
    <source>
    </source>
</evidence>
<evidence type="ECO:0000269" key="3">
    <source>
    </source>
</evidence>
<evidence type="ECO:0000269" key="4">
    <source ref="5"/>
</evidence>
<evidence type="ECO:0000303" key="5">
    <source>
    </source>
</evidence>
<evidence type="ECO:0000303" key="6">
    <source ref="5"/>
</evidence>
<evidence type="ECO:0000305" key="7"/>
<evidence type="ECO:0000312" key="8">
    <source>
        <dbReference type="Araport" id="AT2G03440"/>
    </source>
</evidence>
<evidence type="ECO:0000312" key="9">
    <source>
        <dbReference type="EMBL" id="AAD17432.1"/>
    </source>
</evidence>
<evidence type="ECO:0007744" key="10">
    <source>
    </source>
</evidence>
<reference key="1">
    <citation type="journal article" date="1999" name="Nature">
        <title>Sequence and analysis of chromosome 2 of the plant Arabidopsis thaliana.</title>
        <authorList>
            <person name="Lin X."/>
            <person name="Kaul S."/>
            <person name="Rounsley S.D."/>
            <person name="Shea T.P."/>
            <person name="Benito M.-I."/>
            <person name="Town C.D."/>
            <person name="Fujii C.Y."/>
            <person name="Mason T.M."/>
            <person name="Bowman C.L."/>
            <person name="Barnstead M.E."/>
            <person name="Feldblyum T.V."/>
            <person name="Buell C.R."/>
            <person name="Ketchum K.A."/>
            <person name="Lee J.J."/>
            <person name="Ronning C.M."/>
            <person name="Koo H.L."/>
            <person name="Moffat K.S."/>
            <person name="Cronin L.A."/>
            <person name="Shen M."/>
            <person name="Pai G."/>
            <person name="Van Aken S."/>
            <person name="Umayam L."/>
            <person name="Tallon L.J."/>
            <person name="Gill J.E."/>
            <person name="Adams M.D."/>
            <person name="Carrera A.J."/>
            <person name="Creasy T.H."/>
            <person name="Goodman H.M."/>
            <person name="Somerville C.R."/>
            <person name="Copenhaver G.P."/>
            <person name="Preuss D."/>
            <person name="Nierman W.C."/>
            <person name="White O."/>
            <person name="Eisen J.A."/>
            <person name="Salzberg S.L."/>
            <person name="Fraser C.M."/>
            <person name="Venter J.C."/>
        </authorList>
    </citation>
    <scope>NUCLEOTIDE SEQUENCE [LARGE SCALE GENOMIC DNA]</scope>
    <source>
        <strain>cv. Columbia</strain>
    </source>
</reference>
<reference key="2">
    <citation type="journal article" date="2017" name="Plant J.">
        <title>Araport11: a complete reannotation of the Arabidopsis thaliana reference genome.</title>
        <authorList>
            <person name="Cheng C.Y."/>
            <person name="Krishnakumar V."/>
            <person name="Chan A.P."/>
            <person name="Thibaud-Nissen F."/>
            <person name="Schobel S."/>
            <person name="Town C.D."/>
        </authorList>
    </citation>
    <scope>GENOME REANNOTATION</scope>
    <source>
        <strain>cv. Columbia</strain>
    </source>
</reference>
<reference key="3">
    <citation type="journal article" date="2003" name="Science">
        <title>Empirical analysis of transcriptional activity in the Arabidopsis genome.</title>
        <authorList>
            <person name="Yamada K."/>
            <person name="Lim J."/>
            <person name="Dale J.M."/>
            <person name="Chen H."/>
            <person name="Shinn P."/>
            <person name="Palm C.J."/>
            <person name="Southwick A.M."/>
            <person name="Wu H.C."/>
            <person name="Kim C.J."/>
            <person name="Nguyen M."/>
            <person name="Pham P.K."/>
            <person name="Cheuk R.F."/>
            <person name="Karlin-Newmann G."/>
            <person name="Liu S.X."/>
            <person name="Lam B."/>
            <person name="Sakano H."/>
            <person name="Wu T."/>
            <person name="Yu G."/>
            <person name="Miranda M."/>
            <person name="Quach H.L."/>
            <person name="Tripp M."/>
            <person name="Chang C.H."/>
            <person name="Lee J.M."/>
            <person name="Toriumi M.J."/>
            <person name="Chan M.M."/>
            <person name="Tang C.C."/>
            <person name="Onodera C.S."/>
            <person name="Deng J.M."/>
            <person name="Akiyama K."/>
            <person name="Ansari Y."/>
            <person name="Arakawa T."/>
            <person name="Banh J."/>
            <person name="Banno F."/>
            <person name="Bowser L."/>
            <person name="Brooks S.Y."/>
            <person name="Carninci P."/>
            <person name="Chao Q."/>
            <person name="Choy N."/>
            <person name="Enju A."/>
            <person name="Goldsmith A.D."/>
            <person name="Gurjal M."/>
            <person name="Hansen N.F."/>
            <person name="Hayashizaki Y."/>
            <person name="Johnson-Hopson C."/>
            <person name="Hsuan V.W."/>
            <person name="Iida K."/>
            <person name="Karnes M."/>
            <person name="Khan S."/>
            <person name="Koesema E."/>
            <person name="Ishida J."/>
            <person name="Jiang P.X."/>
            <person name="Jones T."/>
            <person name="Kawai J."/>
            <person name="Kamiya A."/>
            <person name="Meyers C."/>
            <person name="Nakajima M."/>
            <person name="Narusaka M."/>
            <person name="Seki M."/>
            <person name="Sakurai T."/>
            <person name="Satou M."/>
            <person name="Tamse R."/>
            <person name="Vaysberg M."/>
            <person name="Wallender E.K."/>
            <person name="Wong C."/>
            <person name="Yamamura Y."/>
            <person name="Yuan S."/>
            <person name="Shinozaki K."/>
            <person name="Davis R.W."/>
            <person name="Theologis A."/>
            <person name="Ecker J.R."/>
        </authorList>
    </citation>
    <scope>NUCLEOTIDE SEQUENCE [LARGE SCALE MRNA]</scope>
    <source>
        <strain>cv. Columbia</strain>
    </source>
</reference>
<reference key="4">
    <citation type="submission" date="2006-07" db="EMBL/GenBank/DDBJ databases">
        <title>Large-scale analysis of RIKEN Arabidopsis full-length (RAFL) cDNAs.</title>
        <authorList>
            <person name="Totoki Y."/>
            <person name="Seki M."/>
            <person name="Ishida J."/>
            <person name="Nakajima M."/>
            <person name="Enju A."/>
            <person name="Kamiya A."/>
            <person name="Narusaka M."/>
            <person name="Shin-i T."/>
            <person name="Nakagawa M."/>
            <person name="Sakamoto N."/>
            <person name="Oishi K."/>
            <person name="Kohara Y."/>
            <person name="Kobayashi M."/>
            <person name="Toyoda A."/>
            <person name="Sakaki Y."/>
            <person name="Sakurai T."/>
            <person name="Iida K."/>
            <person name="Akiyama K."/>
            <person name="Satou M."/>
            <person name="Toyoda T."/>
            <person name="Konagaya A."/>
            <person name="Carninci P."/>
            <person name="Kawai J."/>
            <person name="Hayashizaki Y."/>
            <person name="Shinozaki K."/>
        </authorList>
    </citation>
    <scope>NUCLEOTIDE SEQUENCE [LARGE SCALE MRNA]</scope>
    <source>
        <strain>cv. Columbia</strain>
    </source>
</reference>
<reference key="5">
    <citation type="journal article" date="2004" name="Physiol. Mol. Plant Pathol.">
        <title>Identification and functional analysis of Arabidopsis proteins that interact with resistance gene product RPS2 in yeast.</title>
        <authorList>
            <person name="Quirino B.F."/>
            <person name="Genger R."/>
            <person name="Ham J.H."/>
            <person name="Zabala G."/>
            <person name="Bent A.F."/>
        </authorList>
    </citation>
    <scope>FUNCTION</scope>
    <scope>DISRUPTION PHENOTYPE</scope>
    <scope>INTERACTION WITH RPS2</scope>
    <source>
        <strain>cv. Columbia</strain>
    </source>
</reference>
<reference key="6">
    <citation type="journal article" date="2008" name="Planta">
        <title>Distinct roles of the pepper hypersensitive induced reaction protein gene CaHIR1 in disease and osmotic stress, as determined by comparative transcriptome and proteome analyses.</title>
        <authorList>
            <person name="Jung H.W."/>
            <person name="Lim C.W."/>
            <person name="Lee S.C."/>
            <person name="Choi H.W."/>
            <person name="Hwang C.H."/>
            <person name="Hwang B.K."/>
        </authorList>
    </citation>
    <scope>INDUCTION BY PSEUDOMONAS SYRINGAE</scope>
    <scope>IDENTIFICATION BY MASS SPECTROMETRY</scope>
</reference>
<reference key="7">
    <citation type="journal article" date="2010" name="Mol. Cells">
        <title>Identification of an Arabidopsis Nodulin-related protein in heat stress.</title>
        <authorList>
            <person name="Fu Q."/>
            <person name="Li S."/>
            <person name="Yu D."/>
        </authorList>
    </citation>
    <scope>FUNCTION</scope>
    <scope>DISRUPTION PHENOTYPE</scope>
    <scope>DEVELOPMENTAL STAGE</scope>
    <scope>INDUCTION BY COLD</scope>
    <scope>TISSUE SPECIFICITY</scope>
    <source>
        <strain>cv. Columbia</strain>
    </source>
</reference>
<reference key="8">
    <citation type="journal article" date="2012" name="Mol. Cell. Proteomics">
        <title>Comparative large-scale characterisation of plant vs. mammal proteins reveals similar and idiosyncratic N-alpha acetylation features.</title>
        <authorList>
            <person name="Bienvenut W.V."/>
            <person name="Sumpton D."/>
            <person name="Martinez A."/>
            <person name="Lilla S."/>
            <person name="Espagne C."/>
            <person name="Meinnel T."/>
            <person name="Giglione C."/>
        </authorList>
    </citation>
    <scope>ACETYLATION [LARGE SCALE ANALYSIS] AT MET-1</scope>
    <scope>IDENTIFICATION BY MASS SPECTROMETRY [LARGE SCALE ANALYSIS]</scope>
</reference>
<comment type="function">
    <text evidence="3 4">Prevents accumulation of abscisic acid (ABA) after heat treatment, thus reducing thermotolerance. May be a negative regulator of the ABA signaling/synthesis pathway (PubMed:20016941). Required for defense responses against avirulent bacteria such as P.syringae pv. tomato DC3000 (avrRpt2) (Ref.5).</text>
</comment>
<comment type="subunit">
    <text evidence="4">Interacts with RPS2.</text>
</comment>
<comment type="tissue specificity">
    <text evidence="3">Expressed in roots, leaves, flowers and siliques.</text>
</comment>
<comment type="developmental stage">
    <text evidence="3">Accumulates in meristematic tissues such as shoot apex and root tips, young leaf veins, stamens and stigmas of flowers, and abscission layers of young siliques. In young seedlings, present in root tips and junctions of roots and hypocotyls. Highest levels are reached in ten days old seedlings. In adult plants, confined to vasculature and hydathodes in leaves, and meristems. Also observed in floral developing organs.</text>
</comment>
<comment type="induction">
    <text evidence="2 3">Induced by P.syringae pv. tomato (PubMed:17899171). Repressed by heat stress (42 degrees Celsius) but induced by low temperature (4 degrees Celsius). Slightly repressed by NaCl (PubMed:20016941).</text>
</comment>
<comment type="disruption phenotype">
    <text evidence="3 4">No obvious phenotype under heat stress (PubMed:20016941). Impaired resistance to avirulent bacteria P.syringae pv. tomato DC3000 (avrRpt2) (Ref.5).</text>
</comment>
<protein>
    <recommendedName>
        <fullName evidence="5">Nodulin-related protein 1</fullName>
        <shortName evidence="5">AtNRP1</shortName>
    </recommendedName>
    <alternativeName>
        <fullName evidence="6">RPS2-interacting protein 11</fullName>
    </alternativeName>
</protein>
<proteinExistence type="evidence at protein level"/>
<name>NDRP1_ARATH</name>
<sequence>MDFFTDQVKKKFSDKKPESSDPEPNHNKNKPGHTEPTTHKPGHGEPTTHKPVSNTDPTTHRPATNAELMASAKIVAEAAQAAARHESDKLDKAKVAGATADILDAASRYGKLDEKSGVGQYLEKAEQYLHKYETSHSHSSTGGTGSHGNVGGHGGGAGAPAAKKEDEKSGGGHGFGDYAKMAQGFMK</sequence>